<sequence length="372" mass="41276">MAGYPTNGSVYVSNLPLGTDENMLADYFGTIGLLKRDKRTGTPKVWLYRDKETDEPKGDATVTYEDPHAALAAVEWFNNKDFHGNTIGVFMAESKNKNAGDAVEFVEFDGGAEETNGGAGRGRGQADSSAKPWQQDGDWMCPNTSCTNVNFAFRGVCNRCGTARPAGASGGSMGAGRGRGRGGGADGGAPGKQPSGAPTGLFGPNDWACPMCGNVNWAKRLKCNICNTNKPGQNEGGVRGGRGGGYKELDEQELEETKRRRREAEEDDGEMYDEFGNLKKKYRVKTNQADTRPAVAAGRAGWEVEELGIDKDGRERSRDRQRDRGRDHHYDKDRRRSRSRERERGKERDYDYDHDRDRDRDYGRERGSRYRN</sequence>
<comment type="function">
    <text evidence="1">TAFs are components of the transcription factor IID (TFIID) complex that is essential for mediating regulation of RNA polymerase transcription.</text>
</comment>
<comment type="subunit">
    <text evidence="7">Component of the TFIID complex. TFIID is composed of TATA binding protein (TBP) and a number of TBP-associated factors (TAFs) whose MWs range from 14-217 kDa. Interacts with TAF4, TAF4B and TAF12B.</text>
</comment>
<comment type="subcellular location">
    <subcellularLocation>
        <location evidence="8">Nucleus</location>
    </subcellularLocation>
</comment>
<comment type="tissue specificity">
    <text evidence="6">Expressed in roots, leaves and inflorescences.</text>
</comment>
<comment type="similarity">
    <text evidence="8">Belongs to the TAF15 family.</text>
</comment>
<comment type="sequence caution" evidence="8">
    <conflict type="erroneous gene model prediction">
        <sequence resource="EMBL-CDS" id="AAD50053"/>
    </conflict>
</comment>
<gene>
    <name type="primary">TAF15</name>
    <name type="ordered locus">At1g50300</name>
    <name type="ORF">F14I3.10</name>
    <name type="ORF">F14I3.23</name>
</gene>
<reference key="1">
    <citation type="journal article" date="2004" name="Gene">
        <title>TBP-associated factors in Arabidopsis.</title>
        <authorList>
            <person name="Lago C."/>
            <person name="Clerici E."/>
            <person name="Mizzi L."/>
            <person name="Colombo L."/>
            <person name="Kater M.M."/>
        </authorList>
    </citation>
    <scope>NUCLEOTIDE SEQUENCE [MRNA]</scope>
    <scope>IDENTIFICATION</scope>
    <scope>NOMENCLATURE</scope>
    <scope>TISSUE SPECIFICITY</scope>
</reference>
<reference key="2">
    <citation type="journal article" date="2007" name="Plant Mol. Biol.">
        <title>Yeast two-hybrid map of Arabidopsis TFIID.</title>
        <authorList>
            <person name="Lawit S.J."/>
            <person name="O'Grady K."/>
            <person name="Gurley W.B."/>
            <person name="Czarnecka-Verner E."/>
        </authorList>
    </citation>
    <scope>NUCLEOTIDE SEQUENCE [MRNA]</scope>
    <scope>INTERACTION WITH TAF4; TAF4B AND TAF12B</scope>
    <source>
        <strain>cv. Columbia</strain>
    </source>
</reference>
<reference key="3">
    <citation type="journal article" date="2000" name="Nature">
        <title>Sequence and analysis of chromosome 1 of the plant Arabidopsis thaliana.</title>
        <authorList>
            <person name="Theologis A."/>
            <person name="Ecker J.R."/>
            <person name="Palm C.J."/>
            <person name="Federspiel N.A."/>
            <person name="Kaul S."/>
            <person name="White O."/>
            <person name="Alonso J."/>
            <person name="Altafi H."/>
            <person name="Araujo R."/>
            <person name="Bowman C.L."/>
            <person name="Brooks S.Y."/>
            <person name="Buehler E."/>
            <person name="Chan A."/>
            <person name="Chao Q."/>
            <person name="Chen H."/>
            <person name="Cheuk R.F."/>
            <person name="Chin C.W."/>
            <person name="Chung M.K."/>
            <person name="Conn L."/>
            <person name="Conway A.B."/>
            <person name="Conway A.R."/>
            <person name="Creasy T.H."/>
            <person name="Dewar K."/>
            <person name="Dunn P."/>
            <person name="Etgu P."/>
            <person name="Feldblyum T.V."/>
            <person name="Feng J.-D."/>
            <person name="Fong B."/>
            <person name="Fujii C.Y."/>
            <person name="Gill J.E."/>
            <person name="Goldsmith A.D."/>
            <person name="Haas B."/>
            <person name="Hansen N.F."/>
            <person name="Hughes B."/>
            <person name="Huizar L."/>
            <person name="Hunter J.L."/>
            <person name="Jenkins J."/>
            <person name="Johnson-Hopson C."/>
            <person name="Khan S."/>
            <person name="Khaykin E."/>
            <person name="Kim C.J."/>
            <person name="Koo H.L."/>
            <person name="Kremenetskaia I."/>
            <person name="Kurtz D.B."/>
            <person name="Kwan A."/>
            <person name="Lam B."/>
            <person name="Langin-Hooper S."/>
            <person name="Lee A."/>
            <person name="Lee J.M."/>
            <person name="Lenz C.A."/>
            <person name="Li J.H."/>
            <person name="Li Y.-P."/>
            <person name="Lin X."/>
            <person name="Liu S.X."/>
            <person name="Liu Z.A."/>
            <person name="Luros J.S."/>
            <person name="Maiti R."/>
            <person name="Marziali A."/>
            <person name="Militscher J."/>
            <person name="Miranda M."/>
            <person name="Nguyen M."/>
            <person name="Nierman W.C."/>
            <person name="Osborne B.I."/>
            <person name="Pai G."/>
            <person name="Peterson J."/>
            <person name="Pham P.K."/>
            <person name="Rizzo M."/>
            <person name="Rooney T."/>
            <person name="Rowley D."/>
            <person name="Sakano H."/>
            <person name="Salzberg S.L."/>
            <person name="Schwartz J.R."/>
            <person name="Shinn P."/>
            <person name="Southwick A.M."/>
            <person name="Sun H."/>
            <person name="Tallon L.J."/>
            <person name="Tambunga G."/>
            <person name="Toriumi M.J."/>
            <person name="Town C.D."/>
            <person name="Utterback T."/>
            <person name="Van Aken S."/>
            <person name="Vaysberg M."/>
            <person name="Vysotskaia V.S."/>
            <person name="Walker M."/>
            <person name="Wu D."/>
            <person name="Yu G."/>
            <person name="Fraser C.M."/>
            <person name="Venter J.C."/>
            <person name="Davis R.W."/>
        </authorList>
    </citation>
    <scope>NUCLEOTIDE SEQUENCE [LARGE SCALE GENOMIC DNA]</scope>
    <source>
        <strain>cv. Columbia</strain>
    </source>
</reference>
<reference key="4">
    <citation type="journal article" date="2017" name="Plant J.">
        <title>Araport11: a complete reannotation of the Arabidopsis thaliana reference genome.</title>
        <authorList>
            <person name="Cheng C.Y."/>
            <person name="Krishnakumar V."/>
            <person name="Chan A.P."/>
            <person name="Thibaud-Nissen F."/>
            <person name="Schobel S."/>
            <person name="Town C.D."/>
        </authorList>
    </citation>
    <scope>GENOME REANNOTATION</scope>
    <source>
        <strain>cv. Columbia</strain>
    </source>
</reference>
<reference key="5">
    <citation type="journal article" date="2003" name="Science">
        <title>Empirical analysis of transcriptional activity in the Arabidopsis genome.</title>
        <authorList>
            <person name="Yamada K."/>
            <person name="Lim J."/>
            <person name="Dale J.M."/>
            <person name="Chen H."/>
            <person name="Shinn P."/>
            <person name="Palm C.J."/>
            <person name="Southwick A.M."/>
            <person name="Wu H.C."/>
            <person name="Kim C.J."/>
            <person name="Nguyen M."/>
            <person name="Pham P.K."/>
            <person name="Cheuk R.F."/>
            <person name="Karlin-Newmann G."/>
            <person name="Liu S.X."/>
            <person name="Lam B."/>
            <person name="Sakano H."/>
            <person name="Wu T."/>
            <person name="Yu G."/>
            <person name="Miranda M."/>
            <person name="Quach H.L."/>
            <person name="Tripp M."/>
            <person name="Chang C.H."/>
            <person name="Lee J.M."/>
            <person name="Toriumi M.J."/>
            <person name="Chan M.M."/>
            <person name="Tang C.C."/>
            <person name="Onodera C.S."/>
            <person name="Deng J.M."/>
            <person name="Akiyama K."/>
            <person name="Ansari Y."/>
            <person name="Arakawa T."/>
            <person name="Banh J."/>
            <person name="Banno F."/>
            <person name="Bowser L."/>
            <person name="Brooks S.Y."/>
            <person name="Carninci P."/>
            <person name="Chao Q."/>
            <person name="Choy N."/>
            <person name="Enju A."/>
            <person name="Goldsmith A.D."/>
            <person name="Gurjal M."/>
            <person name="Hansen N.F."/>
            <person name="Hayashizaki Y."/>
            <person name="Johnson-Hopson C."/>
            <person name="Hsuan V.W."/>
            <person name="Iida K."/>
            <person name="Karnes M."/>
            <person name="Khan S."/>
            <person name="Koesema E."/>
            <person name="Ishida J."/>
            <person name="Jiang P.X."/>
            <person name="Jones T."/>
            <person name="Kawai J."/>
            <person name="Kamiya A."/>
            <person name="Meyers C."/>
            <person name="Nakajima M."/>
            <person name="Narusaka M."/>
            <person name="Seki M."/>
            <person name="Sakurai T."/>
            <person name="Satou M."/>
            <person name="Tamse R."/>
            <person name="Vaysberg M."/>
            <person name="Wallender E.K."/>
            <person name="Wong C."/>
            <person name="Yamamura Y."/>
            <person name="Yuan S."/>
            <person name="Shinozaki K."/>
            <person name="Davis R.W."/>
            <person name="Theologis A."/>
            <person name="Ecker J.R."/>
        </authorList>
    </citation>
    <scope>NUCLEOTIDE SEQUENCE [LARGE SCALE MRNA]</scope>
    <source>
        <strain>cv. Columbia</strain>
    </source>
</reference>
<evidence type="ECO:0000250" key="1"/>
<evidence type="ECO:0000255" key="2"/>
<evidence type="ECO:0000255" key="3">
    <source>
        <dbReference type="PROSITE-ProRule" id="PRU00176"/>
    </source>
</evidence>
<evidence type="ECO:0000255" key="4">
    <source>
        <dbReference type="PROSITE-ProRule" id="PRU00322"/>
    </source>
</evidence>
<evidence type="ECO:0000256" key="5">
    <source>
        <dbReference type="SAM" id="MobiDB-lite"/>
    </source>
</evidence>
<evidence type="ECO:0000269" key="6">
    <source>
    </source>
</evidence>
<evidence type="ECO:0000269" key="7">
    <source>
    </source>
</evidence>
<evidence type="ECO:0000305" key="8"/>
<accession>Q9AST1</accession>
<accession>Q9SX47</accession>
<feature type="chain" id="PRO_0000424054" description="Transcription initiation factor TFIID subunit 15">
    <location>
        <begin position="1"/>
        <end position="372"/>
    </location>
</feature>
<feature type="domain" description="RRM" evidence="3">
    <location>
        <begin position="8"/>
        <end position="94"/>
    </location>
</feature>
<feature type="zinc finger region" description="RanBP2-type 1" evidence="4">
    <location>
        <begin position="135"/>
        <end position="166"/>
    </location>
</feature>
<feature type="zinc finger region" description="RanBP2-type 2" evidence="4">
    <location>
        <begin position="203"/>
        <end position="232"/>
    </location>
</feature>
<feature type="region of interest" description="Disordered" evidence="5">
    <location>
        <begin position="111"/>
        <end position="136"/>
    </location>
</feature>
<feature type="region of interest" description="Disordered" evidence="5">
    <location>
        <begin position="166"/>
        <end position="199"/>
    </location>
</feature>
<feature type="region of interest" description="Disordered" evidence="5">
    <location>
        <begin position="229"/>
        <end position="272"/>
    </location>
</feature>
<feature type="region of interest" description="Disordered" evidence="5">
    <location>
        <begin position="285"/>
        <end position="372"/>
    </location>
</feature>
<feature type="coiled-coil region" evidence="2">
    <location>
        <begin position="245"/>
        <end position="272"/>
    </location>
</feature>
<feature type="compositionally biased region" description="Gly residues" evidence="5">
    <location>
        <begin position="168"/>
        <end position="190"/>
    </location>
</feature>
<feature type="compositionally biased region" description="Gly residues" evidence="5">
    <location>
        <begin position="234"/>
        <end position="244"/>
    </location>
</feature>
<feature type="compositionally biased region" description="Basic and acidic residues" evidence="5">
    <location>
        <begin position="245"/>
        <end position="264"/>
    </location>
</feature>
<feature type="compositionally biased region" description="Basic and acidic residues" evidence="5">
    <location>
        <begin position="308"/>
        <end position="372"/>
    </location>
</feature>
<keyword id="KW-0010">Activator</keyword>
<keyword id="KW-0175">Coiled coil</keyword>
<keyword id="KW-0479">Metal-binding</keyword>
<keyword id="KW-0539">Nucleus</keyword>
<keyword id="KW-1185">Reference proteome</keyword>
<keyword id="KW-0677">Repeat</keyword>
<keyword id="KW-0694">RNA-binding</keyword>
<keyword id="KW-0804">Transcription</keyword>
<keyword id="KW-0805">Transcription regulation</keyword>
<keyword id="KW-0862">Zinc</keyword>
<keyword id="KW-0863">Zinc-finger</keyword>
<protein>
    <recommendedName>
        <fullName>Transcription initiation factor TFIID subunit 15</fullName>
    </recommendedName>
    <alternativeName>
        <fullName>TBP-associated factor 15</fullName>
        <shortName>AtTAF15</shortName>
    </alternativeName>
</protein>
<name>TAF15_ARATH</name>
<organism>
    <name type="scientific">Arabidopsis thaliana</name>
    <name type="common">Mouse-ear cress</name>
    <dbReference type="NCBI Taxonomy" id="3702"/>
    <lineage>
        <taxon>Eukaryota</taxon>
        <taxon>Viridiplantae</taxon>
        <taxon>Streptophyta</taxon>
        <taxon>Embryophyta</taxon>
        <taxon>Tracheophyta</taxon>
        <taxon>Spermatophyta</taxon>
        <taxon>Magnoliopsida</taxon>
        <taxon>eudicotyledons</taxon>
        <taxon>Gunneridae</taxon>
        <taxon>Pentapetalae</taxon>
        <taxon>rosids</taxon>
        <taxon>malvids</taxon>
        <taxon>Brassicales</taxon>
        <taxon>Brassicaceae</taxon>
        <taxon>Camelineae</taxon>
        <taxon>Arabidopsis</taxon>
    </lineage>
</organism>
<proteinExistence type="evidence at protein level"/>
<dbReference type="EMBL" id="AY463618">
    <property type="protein sequence ID" value="AAR28020.1"/>
    <property type="molecule type" value="mRNA"/>
</dbReference>
<dbReference type="EMBL" id="AC007980">
    <property type="protein sequence ID" value="AAD50053.1"/>
    <property type="status" value="ALT_SEQ"/>
    <property type="molecule type" value="Genomic_DNA"/>
</dbReference>
<dbReference type="EMBL" id="CP002684">
    <property type="protein sequence ID" value="AEE32534.1"/>
    <property type="molecule type" value="Genomic_DNA"/>
</dbReference>
<dbReference type="EMBL" id="AF367295">
    <property type="protein sequence ID" value="AAK32882.1"/>
    <property type="molecule type" value="mRNA"/>
</dbReference>
<dbReference type="EMBL" id="AY091686">
    <property type="protein sequence ID" value="AAM10285.1"/>
    <property type="molecule type" value="mRNA"/>
</dbReference>
<dbReference type="PIR" id="C96539">
    <property type="entry name" value="C96539"/>
</dbReference>
<dbReference type="RefSeq" id="NP_564565.1">
    <property type="nucleotide sequence ID" value="NM_103914.3"/>
</dbReference>
<dbReference type="SMR" id="Q9AST1"/>
<dbReference type="BioGRID" id="26677">
    <property type="interactions" value="6"/>
</dbReference>
<dbReference type="FunCoup" id="Q9AST1">
    <property type="interactions" value="1005"/>
</dbReference>
<dbReference type="IntAct" id="Q9AST1">
    <property type="interactions" value="9"/>
</dbReference>
<dbReference type="STRING" id="3702.Q9AST1"/>
<dbReference type="PaxDb" id="3702-AT1G50300.1"/>
<dbReference type="ProteomicsDB" id="234122"/>
<dbReference type="EnsemblPlants" id="AT1G50300.1">
    <property type="protein sequence ID" value="AT1G50300.1"/>
    <property type="gene ID" value="AT1G50300"/>
</dbReference>
<dbReference type="GeneID" id="841452"/>
<dbReference type="Gramene" id="AT1G50300.1">
    <property type="protein sequence ID" value="AT1G50300.1"/>
    <property type="gene ID" value="AT1G50300"/>
</dbReference>
<dbReference type="KEGG" id="ath:AT1G50300"/>
<dbReference type="Araport" id="AT1G50300"/>
<dbReference type="TAIR" id="AT1G50300">
    <property type="gene designation" value="TAF15"/>
</dbReference>
<dbReference type="eggNOG" id="KOG1995">
    <property type="taxonomic scope" value="Eukaryota"/>
</dbReference>
<dbReference type="HOGENOM" id="CLU_025609_0_0_1"/>
<dbReference type="InParanoid" id="Q9AST1"/>
<dbReference type="OMA" id="WICPDID"/>
<dbReference type="PhylomeDB" id="Q9AST1"/>
<dbReference type="PRO" id="PR:Q9AST1"/>
<dbReference type="Proteomes" id="UP000006548">
    <property type="component" value="Chromosome 1"/>
</dbReference>
<dbReference type="ExpressionAtlas" id="Q9AST1">
    <property type="expression patterns" value="baseline and differential"/>
</dbReference>
<dbReference type="GO" id="GO:0005634">
    <property type="term" value="C:nucleus"/>
    <property type="evidence" value="ECO:0007669"/>
    <property type="project" value="UniProtKB-SubCell"/>
</dbReference>
<dbReference type="GO" id="GO:0003723">
    <property type="term" value="F:RNA binding"/>
    <property type="evidence" value="ECO:0007669"/>
    <property type="project" value="UniProtKB-KW"/>
</dbReference>
<dbReference type="GO" id="GO:0008270">
    <property type="term" value="F:zinc ion binding"/>
    <property type="evidence" value="ECO:0007669"/>
    <property type="project" value="UniProtKB-KW"/>
</dbReference>
<dbReference type="CDD" id="cd12534">
    <property type="entry name" value="RRM_SARFH"/>
    <property type="match status" value="1"/>
</dbReference>
<dbReference type="FunFam" id="3.30.70.330:FF:000574">
    <property type="entry name" value="HIV Tat-specific factor 1"/>
    <property type="match status" value="1"/>
</dbReference>
<dbReference type="FunFam" id="4.10.1060.10:FF:000008">
    <property type="entry name" value="TATA-binding protein-associated factor 2N isoform X1"/>
    <property type="match status" value="1"/>
</dbReference>
<dbReference type="FunFam" id="4.10.1060.10:FF:000004">
    <property type="entry name" value="Zinc finger Ran-binding domain-containing protein 2"/>
    <property type="match status" value="1"/>
</dbReference>
<dbReference type="Gene3D" id="3.30.70.330">
    <property type="match status" value="1"/>
</dbReference>
<dbReference type="Gene3D" id="4.10.1060.10">
    <property type="entry name" value="Zinc finger, RanBP2-type"/>
    <property type="match status" value="2"/>
</dbReference>
<dbReference type="InterPro" id="IPR012677">
    <property type="entry name" value="Nucleotide-bd_a/b_plait_sf"/>
</dbReference>
<dbReference type="InterPro" id="IPR035979">
    <property type="entry name" value="RBD_domain_sf"/>
</dbReference>
<dbReference type="InterPro" id="IPR000504">
    <property type="entry name" value="RRM_dom"/>
</dbReference>
<dbReference type="InterPro" id="IPR001876">
    <property type="entry name" value="Znf_RanBP2"/>
</dbReference>
<dbReference type="InterPro" id="IPR036443">
    <property type="entry name" value="Znf_RanBP2_sf"/>
</dbReference>
<dbReference type="PANTHER" id="PTHR12999:SF7">
    <property type="entry name" value="TRANSCRIPTION INITIATION FACTOR TFIID SUBUNIT 15B"/>
    <property type="match status" value="1"/>
</dbReference>
<dbReference type="PANTHER" id="PTHR12999">
    <property type="entry name" value="ZINC FINGER RAN-BINDING DOMAIN-CONTAINING PROTEIN 2 ZRANB2-RELATED"/>
    <property type="match status" value="1"/>
</dbReference>
<dbReference type="Pfam" id="PF00076">
    <property type="entry name" value="RRM_1"/>
    <property type="match status" value="1"/>
</dbReference>
<dbReference type="Pfam" id="PF00641">
    <property type="entry name" value="Zn_ribbon_RanBP"/>
    <property type="match status" value="2"/>
</dbReference>
<dbReference type="SMART" id="SM00360">
    <property type="entry name" value="RRM"/>
    <property type="match status" value="1"/>
</dbReference>
<dbReference type="SMART" id="SM00547">
    <property type="entry name" value="ZnF_RBZ"/>
    <property type="match status" value="2"/>
</dbReference>
<dbReference type="SUPFAM" id="SSF90209">
    <property type="entry name" value="Ran binding protein zinc finger-like"/>
    <property type="match status" value="2"/>
</dbReference>
<dbReference type="SUPFAM" id="SSF54928">
    <property type="entry name" value="RNA-binding domain, RBD"/>
    <property type="match status" value="1"/>
</dbReference>
<dbReference type="PROSITE" id="PS50102">
    <property type="entry name" value="RRM"/>
    <property type="match status" value="1"/>
</dbReference>
<dbReference type="PROSITE" id="PS01358">
    <property type="entry name" value="ZF_RANBP2_1"/>
    <property type="match status" value="2"/>
</dbReference>
<dbReference type="PROSITE" id="PS50199">
    <property type="entry name" value="ZF_RANBP2_2"/>
    <property type="match status" value="2"/>
</dbReference>